<proteinExistence type="inferred from homology"/>
<name>RS12_METM5</name>
<sequence length="147" mass="16160">MAGSKSPKGEFAGRKLLLKRKASRWHHYKYVNKALSLKLKADPLEGAPMGRGIVVEKVGLEAKQPNSAIRKCVRVQLIKNGRQVTAFAPGNHAINFIDEHDEVVIEGIGGPSGQAKGDIPGVRYKVVMVGKNSIRELVRGRQEKVKR</sequence>
<dbReference type="EMBL" id="CP000609">
    <property type="protein sequence ID" value="ABO34527.1"/>
    <property type="molecule type" value="Genomic_DNA"/>
</dbReference>
<dbReference type="RefSeq" id="WP_011867985.1">
    <property type="nucleotide sequence ID" value="NC_009135.1"/>
</dbReference>
<dbReference type="SMR" id="A4FWF2"/>
<dbReference type="STRING" id="402880.MmarC5_0211"/>
<dbReference type="GeneID" id="4928410"/>
<dbReference type="KEGG" id="mmq:MmarC5_0211"/>
<dbReference type="eggNOG" id="arCOG04255">
    <property type="taxonomic scope" value="Archaea"/>
</dbReference>
<dbReference type="HOGENOM" id="CLU_115574_0_1_2"/>
<dbReference type="OrthoDB" id="45154at2157"/>
<dbReference type="Proteomes" id="UP000000253">
    <property type="component" value="Chromosome"/>
</dbReference>
<dbReference type="GO" id="GO:0015935">
    <property type="term" value="C:small ribosomal subunit"/>
    <property type="evidence" value="ECO:0007669"/>
    <property type="project" value="InterPro"/>
</dbReference>
<dbReference type="GO" id="GO:0019843">
    <property type="term" value="F:rRNA binding"/>
    <property type="evidence" value="ECO:0007669"/>
    <property type="project" value="UniProtKB-UniRule"/>
</dbReference>
<dbReference type="GO" id="GO:0003735">
    <property type="term" value="F:structural constituent of ribosome"/>
    <property type="evidence" value="ECO:0007669"/>
    <property type="project" value="InterPro"/>
</dbReference>
<dbReference type="GO" id="GO:0006412">
    <property type="term" value="P:translation"/>
    <property type="evidence" value="ECO:0007669"/>
    <property type="project" value="UniProtKB-UniRule"/>
</dbReference>
<dbReference type="CDD" id="cd03367">
    <property type="entry name" value="Ribosomal_S23"/>
    <property type="match status" value="1"/>
</dbReference>
<dbReference type="FunFam" id="2.40.50.140:FF:000007">
    <property type="entry name" value="40S ribosomal protein S23"/>
    <property type="match status" value="1"/>
</dbReference>
<dbReference type="Gene3D" id="2.40.50.140">
    <property type="entry name" value="Nucleic acid-binding proteins"/>
    <property type="match status" value="1"/>
</dbReference>
<dbReference type="HAMAP" id="MF_00403_A">
    <property type="entry name" value="Ribosomal_uS12_A"/>
    <property type="match status" value="1"/>
</dbReference>
<dbReference type="InterPro" id="IPR012340">
    <property type="entry name" value="NA-bd_OB-fold"/>
</dbReference>
<dbReference type="InterPro" id="IPR006032">
    <property type="entry name" value="Ribosomal_uS12"/>
</dbReference>
<dbReference type="InterPro" id="IPR022863">
    <property type="entry name" value="Ribosomal_uS12_arc"/>
</dbReference>
<dbReference type="InterPro" id="IPR005680">
    <property type="entry name" value="Ribosomal_uS12_euk/arc"/>
</dbReference>
<dbReference type="NCBIfam" id="NF003254">
    <property type="entry name" value="PRK04211.1"/>
    <property type="match status" value="1"/>
</dbReference>
<dbReference type="NCBIfam" id="TIGR00982">
    <property type="entry name" value="uS12_E_A"/>
    <property type="match status" value="1"/>
</dbReference>
<dbReference type="PANTHER" id="PTHR11652">
    <property type="entry name" value="30S RIBOSOMAL PROTEIN S12 FAMILY MEMBER"/>
    <property type="match status" value="1"/>
</dbReference>
<dbReference type="Pfam" id="PF00164">
    <property type="entry name" value="Ribosom_S12_S23"/>
    <property type="match status" value="1"/>
</dbReference>
<dbReference type="PIRSF" id="PIRSF002133">
    <property type="entry name" value="Ribosomal_S12/S23"/>
    <property type="match status" value="1"/>
</dbReference>
<dbReference type="SUPFAM" id="SSF50249">
    <property type="entry name" value="Nucleic acid-binding proteins"/>
    <property type="match status" value="1"/>
</dbReference>
<dbReference type="PROSITE" id="PS00055">
    <property type="entry name" value="RIBOSOMAL_S12"/>
    <property type="match status" value="1"/>
</dbReference>
<accession>A4FWF2</accession>
<comment type="function">
    <text evidence="1">With S4 and S5 plays an important role in translational accuracy. Located at the interface of the 30S and 50S subunits.</text>
</comment>
<comment type="subunit">
    <text evidence="1">Part of the 30S ribosomal subunit.</text>
</comment>
<comment type="similarity">
    <text evidence="1">Belongs to the universal ribosomal protein uS12 family.</text>
</comment>
<protein>
    <recommendedName>
        <fullName evidence="1">Small ribosomal subunit protein uS12</fullName>
    </recommendedName>
    <alternativeName>
        <fullName evidence="2">30S ribosomal protein S12</fullName>
    </alternativeName>
</protein>
<keyword id="KW-0687">Ribonucleoprotein</keyword>
<keyword id="KW-0689">Ribosomal protein</keyword>
<keyword id="KW-0694">RNA-binding</keyword>
<keyword id="KW-0699">rRNA-binding</keyword>
<reference key="1">
    <citation type="submission" date="2007-03" db="EMBL/GenBank/DDBJ databases">
        <title>Complete sequence of chromosome of Methanococcus maripaludis C5.</title>
        <authorList>
            <consortium name="US DOE Joint Genome Institute"/>
            <person name="Copeland A."/>
            <person name="Lucas S."/>
            <person name="Lapidus A."/>
            <person name="Barry K."/>
            <person name="Glavina del Rio T."/>
            <person name="Dalin E."/>
            <person name="Tice H."/>
            <person name="Pitluck S."/>
            <person name="Chertkov O."/>
            <person name="Brettin T."/>
            <person name="Bruce D."/>
            <person name="Han C."/>
            <person name="Detter J.C."/>
            <person name="Schmutz J."/>
            <person name="Larimer F."/>
            <person name="Land M."/>
            <person name="Hauser L."/>
            <person name="Kyrpides N."/>
            <person name="Mikhailova N."/>
            <person name="Sieprawska-Lupa M."/>
            <person name="Whitman W.B."/>
            <person name="Richardson P."/>
        </authorList>
    </citation>
    <scope>NUCLEOTIDE SEQUENCE [LARGE SCALE GENOMIC DNA]</scope>
    <source>
        <strain>C5 / ATCC BAA-1333</strain>
    </source>
</reference>
<feature type="chain" id="PRO_1000049793" description="Small ribosomal subunit protein uS12">
    <location>
        <begin position="1"/>
        <end position="147"/>
    </location>
</feature>
<evidence type="ECO:0000255" key="1">
    <source>
        <dbReference type="HAMAP-Rule" id="MF_00403"/>
    </source>
</evidence>
<evidence type="ECO:0000305" key="2"/>
<gene>
    <name evidence="1" type="primary">rps12</name>
    <name type="ordered locus">MmarC5_0211</name>
</gene>
<organism>
    <name type="scientific">Methanococcus maripaludis (strain C5 / ATCC BAA-1333)</name>
    <dbReference type="NCBI Taxonomy" id="402880"/>
    <lineage>
        <taxon>Archaea</taxon>
        <taxon>Methanobacteriati</taxon>
        <taxon>Methanobacteriota</taxon>
        <taxon>Methanomada group</taxon>
        <taxon>Methanococci</taxon>
        <taxon>Methanococcales</taxon>
        <taxon>Methanococcaceae</taxon>
        <taxon>Methanococcus</taxon>
    </lineage>
</organism>